<proteinExistence type="inferred from homology"/>
<comment type="subcellular location">
    <subcellularLocation>
        <location evidence="1">Cell membrane</location>
        <topology evidence="1">Lipid-anchor</topology>
    </subcellularLocation>
</comment>
<comment type="similarity">
    <text evidence="1">Belongs to the UPF0257 family.</text>
</comment>
<feature type="signal peptide" evidence="1">
    <location>
        <begin position="1"/>
        <end position="16"/>
    </location>
</feature>
<feature type="chain" id="PRO_1000149731" description="UPF0257 lipoprotein YnfC">
    <location>
        <begin position="17"/>
        <end position="236"/>
    </location>
</feature>
<feature type="lipid moiety-binding region" description="N-palmitoyl cysteine" evidence="1">
    <location>
        <position position="17"/>
    </location>
</feature>
<feature type="lipid moiety-binding region" description="S-diacylglycerol cysteine" evidence="1">
    <location>
        <position position="17"/>
    </location>
</feature>
<protein>
    <recommendedName>
        <fullName evidence="1">UPF0257 lipoprotein YnfC</fullName>
    </recommendedName>
</protein>
<accession>B7URS4</accession>
<keyword id="KW-1003">Cell membrane</keyword>
<keyword id="KW-0449">Lipoprotein</keyword>
<keyword id="KW-0472">Membrane</keyword>
<keyword id="KW-0564">Palmitate</keyword>
<keyword id="KW-1185">Reference proteome</keyword>
<keyword id="KW-0732">Signal</keyword>
<evidence type="ECO:0000255" key="1">
    <source>
        <dbReference type="HAMAP-Rule" id="MF_01065"/>
    </source>
</evidence>
<reference key="1">
    <citation type="journal article" date="2009" name="J. Bacteriol.">
        <title>Complete genome sequence and comparative genome analysis of enteropathogenic Escherichia coli O127:H6 strain E2348/69.</title>
        <authorList>
            <person name="Iguchi A."/>
            <person name="Thomson N.R."/>
            <person name="Ogura Y."/>
            <person name="Saunders D."/>
            <person name="Ooka T."/>
            <person name="Henderson I.R."/>
            <person name="Harris D."/>
            <person name="Asadulghani M."/>
            <person name="Kurokawa K."/>
            <person name="Dean P."/>
            <person name="Kenny B."/>
            <person name="Quail M.A."/>
            <person name="Thurston S."/>
            <person name="Dougan G."/>
            <person name="Hayashi T."/>
            <person name="Parkhill J."/>
            <person name="Frankel G."/>
        </authorList>
    </citation>
    <scope>NUCLEOTIDE SEQUENCE [LARGE SCALE GENOMIC DNA]</scope>
    <source>
        <strain>E2348/69 / EPEC</strain>
    </source>
</reference>
<sequence length="236" mass="26487">MKYKLLPCLLAILLTGCDRTEVTLSFTPEMASFSNEFDFDPLRGPVKDFTQTLMDEQGEVTKRVSGTLSEEGCFDSLELLDLENNTLVALVLDANYYRDAETLEKRVRLQGKCQLAELPSAGVSWETDDNGFVIKASSKQMQMEYRYDDQGYPLGKTTTSNDKTLSVSATPSTDPIKKLDYTAVTLLNNQRVGNVKQSCEYDNHANPVDCQLIIVDEGVKPAVERVYTIKNTIDYY</sequence>
<gene>
    <name evidence="1" type="primary">ynfC</name>
    <name type="ordered locus">E2348C_1669</name>
</gene>
<organism>
    <name type="scientific">Escherichia coli O127:H6 (strain E2348/69 / EPEC)</name>
    <dbReference type="NCBI Taxonomy" id="574521"/>
    <lineage>
        <taxon>Bacteria</taxon>
        <taxon>Pseudomonadati</taxon>
        <taxon>Pseudomonadota</taxon>
        <taxon>Gammaproteobacteria</taxon>
        <taxon>Enterobacterales</taxon>
        <taxon>Enterobacteriaceae</taxon>
        <taxon>Escherichia</taxon>
    </lineage>
</organism>
<dbReference type="EMBL" id="FM180568">
    <property type="protein sequence ID" value="CAS09217.1"/>
    <property type="molecule type" value="Genomic_DNA"/>
</dbReference>
<dbReference type="RefSeq" id="WP_001357324.1">
    <property type="nucleotide sequence ID" value="NC_011601.1"/>
</dbReference>
<dbReference type="SMR" id="B7URS4"/>
<dbReference type="KEGG" id="ecg:E2348C_1669"/>
<dbReference type="HOGENOM" id="CLU_1174761_0_0_6"/>
<dbReference type="Proteomes" id="UP000008205">
    <property type="component" value="Chromosome"/>
</dbReference>
<dbReference type="GO" id="GO:0005886">
    <property type="term" value="C:plasma membrane"/>
    <property type="evidence" value="ECO:0007669"/>
    <property type="project" value="UniProtKB-SubCell"/>
</dbReference>
<dbReference type="HAMAP" id="MF_01065">
    <property type="entry name" value="UPF0257"/>
    <property type="match status" value="1"/>
</dbReference>
<dbReference type="InterPro" id="IPR010646">
    <property type="entry name" value="UPF0257"/>
</dbReference>
<dbReference type="NCBIfam" id="NF002798">
    <property type="entry name" value="PRK02939.1"/>
    <property type="match status" value="1"/>
</dbReference>
<dbReference type="Pfam" id="PF06788">
    <property type="entry name" value="UPF0257"/>
    <property type="match status" value="1"/>
</dbReference>
<dbReference type="PROSITE" id="PS51257">
    <property type="entry name" value="PROKAR_LIPOPROTEIN"/>
    <property type="match status" value="1"/>
</dbReference>
<name>YNFC_ECO27</name>